<proteinExistence type="inferred from homology"/>
<evidence type="ECO:0000250" key="1">
    <source>
        <dbReference type="UniProtKB" id="Q9UK45"/>
    </source>
</evidence>
<evidence type="ECO:0000255" key="2">
    <source>
        <dbReference type="PROSITE-ProRule" id="PRU01346"/>
    </source>
</evidence>
<evidence type="ECO:0000305" key="3"/>
<keyword id="KW-0507">mRNA processing</keyword>
<keyword id="KW-0508">mRNA splicing</keyword>
<keyword id="KW-0539">Nucleus</keyword>
<keyword id="KW-1185">Reference proteome</keyword>
<keyword id="KW-0687">Ribonucleoprotein</keyword>
<keyword id="KW-0694">RNA-binding</keyword>
<keyword id="KW-0747">Spliceosome</keyword>
<reference key="1">
    <citation type="journal article" date="2005" name="Nature">
        <title>The genome of the social amoeba Dictyostelium discoideum.</title>
        <authorList>
            <person name="Eichinger L."/>
            <person name="Pachebat J.A."/>
            <person name="Gloeckner G."/>
            <person name="Rajandream M.A."/>
            <person name="Sucgang R."/>
            <person name="Berriman M."/>
            <person name="Song J."/>
            <person name="Olsen R."/>
            <person name="Szafranski K."/>
            <person name="Xu Q."/>
            <person name="Tunggal B."/>
            <person name="Kummerfeld S."/>
            <person name="Madera M."/>
            <person name="Konfortov B.A."/>
            <person name="Rivero F."/>
            <person name="Bankier A.T."/>
            <person name="Lehmann R."/>
            <person name="Hamlin N."/>
            <person name="Davies R."/>
            <person name="Gaudet P."/>
            <person name="Fey P."/>
            <person name="Pilcher K."/>
            <person name="Chen G."/>
            <person name="Saunders D."/>
            <person name="Sodergren E.J."/>
            <person name="Davis P."/>
            <person name="Kerhornou A."/>
            <person name="Nie X."/>
            <person name="Hall N."/>
            <person name="Anjard C."/>
            <person name="Hemphill L."/>
            <person name="Bason N."/>
            <person name="Farbrother P."/>
            <person name="Desany B."/>
            <person name="Just E."/>
            <person name="Morio T."/>
            <person name="Rost R."/>
            <person name="Churcher C.M."/>
            <person name="Cooper J."/>
            <person name="Haydock S."/>
            <person name="van Driessche N."/>
            <person name="Cronin A."/>
            <person name="Goodhead I."/>
            <person name="Muzny D.M."/>
            <person name="Mourier T."/>
            <person name="Pain A."/>
            <person name="Lu M."/>
            <person name="Harper D."/>
            <person name="Lindsay R."/>
            <person name="Hauser H."/>
            <person name="James K.D."/>
            <person name="Quiles M."/>
            <person name="Madan Babu M."/>
            <person name="Saito T."/>
            <person name="Buchrieser C."/>
            <person name="Wardroper A."/>
            <person name="Felder M."/>
            <person name="Thangavelu M."/>
            <person name="Johnson D."/>
            <person name="Knights A."/>
            <person name="Loulseged H."/>
            <person name="Mungall K.L."/>
            <person name="Oliver K."/>
            <person name="Price C."/>
            <person name="Quail M.A."/>
            <person name="Urushihara H."/>
            <person name="Hernandez J."/>
            <person name="Rabbinowitsch E."/>
            <person name="Steffen D."/>
            <person name="Sanders M."/>
            <person name="Ma J."/>
            <person name="Kohara Y."/>
            <person name="Sharp S."/>
            <person name="Simmonds M.N."/>
            <person name="Spiegler S."/>
            <person name="Tivey A."/>
            <person name="Sugano S."/>
            <person name="White B."/>
            <person name="Walker D."/>
            <person name="Woodward J.R."/>
            <person name="Winckler T."/>
            <person name="Tanaka Y."/>
            <person name="Shaulsky G."/>
            <person name="Schleicher M."/>
            <person name="Weinstock G.M."/>
            <person name="Rosenthal A."/>
            <person name="Cox E.C."/>
            <person name="Chisholm R.L."/>
            <person name="Gibbs R.A."/>
            <person name="Loomis W.F."/>
            <person name="Platzer M."/>
            <person name="Kay R.R."/>
            <person name="Williams J.G."/>
            <person name="Dear P.H."/>
            <person name="Noegel A.A."/>
            <person name="Barrell B.G."/>
            <person name="Kuspa A."/>
        </authorList>
    </citation>
    <scope>NUCLEOTIDE SEQUENCE [LARGE SCALE GENOMIC DNA]</scope>
    <source>
        <strain>AX4</strain>
    </source>
</reference>
<accession>Q54HF6</accession>
<dbReference type="EMBL" id="AAFI02000141">
    <property type="protein sequence ID" value="EAL62681.1"/>
    <property type="molecule type" value="Genomic_DNA"/>
</dbReference>
<dbReference type="RefSeq" id="XP_636181.1">
    <property type="nucleotide sequence ID" value="XM_631089.1"/>
</dbReference>
<dbReference type="SMR" id="Q54HF6"/>
<dbReference type="FunCoup" id="Q54HF6">
    <property type="interactions" value="715"/>
</dbReference>
<dbReference type="STRING" id="44689.Q54HF6"/>
<dbReference type="GlyGen" id="Q54HF6">
    <property type="glycosylation" value="1 site"/>
</dbReference>
<dbReference type="PaxDb" id="44689-DDB0233196"/>
<dbReference type="EnsemblProtists" id="EAL62681">
    <property type="protein sequence ID" value="EAL62681"/>
    <property type="gene ID" value="DDB_G0289499"/>
</dbReference>
<dbReference type="GeneID" id="8627168"/>
<dbReference type="KEGG" id="ddi:DDB_G0289499"/>
<dbReference type="dictyBase" id="DDB_G0289499">
    <property type="gene designation" value="lsm7"/>
</dbReference>
<dbReference type="VEuPathDB" id="AmoebaDB:DDB_G0289499"/>
<dbReference type="eggNOG" id="KOG1781">
    <property type="taxonomic scope" value="Eukaryota"/>
</dbReference>
<dbReference type="HOGENOM" id="CLU_076902_3_1_1"/>
<dbReference type="InParanoid" id="Q54HF6"/>
<dbReference type="OMA" id="PFVQQEE"/>
<dbReference type="PhylomeDB" id="Q54HF6"/>
<dbReference type="Reactome" id="R-DDI-430039">
    <property type="pathway name" value="mRNA decay by 5' to 3' exoribonuclease"/>
</dbReference>
<dbReference type="PRO" id="PR:Q54HF6"/>
<dbReference type="Proteomes" id="UP000002195">
    <property type="component" value="Chromosome 5"/>
</dbReference>
<dbReference type="GO" id="GO:0071013">
    <property type="term" value="C:catalytic step 2 spliceosome"/>
    <property type="evidence" value="ECO:0000318"/>
    <property type="project" value="GO_Central"/>
</dbReference>
<dbReference type="GO" id="GO:1990726">
    <property type="term" value="C:Lsm1-7-Pat1 complex"/>
    <property type="evidence" value="ECO:0000318"/>
    <property type="project" value="GO_Central"/>
</dbReference>
<dbReference type="GO" id="GO:0005730">
    <property type="term" value="C:nucleolus"/>
    <property type="evidence" value="ECO:0000250"/>
    <property type="project" value="dictyBase"/>
</dbReference>
<dbReference type="GO" id="GO:0005732">
    <property type="term" value="C:sno(s)RNA-containing ribonucleoprotein complex"/>
    <property type="evidence" value="ECO:0000250"/>
    <property type="project" value="dictyBase"/>
</dbReference>
<dbReference type="GO" id="GO:0097526">
    <property type="term" value="C:spliceosomal tri-snRNP complex"/>
    <property type="evidence" value="ECO:0000318"/>
    <property type="project" value="GO_Central"/>
</dbReference>
<dbReference type="GO" id="GO:0005689">
    <property type="term" value="C:U12-type spliceosomal complex"/>
    <property type="evidence" value="ECO:0000318"/>
    <property type="project" value="GO_Central"/>
</dbReference>
<dbReference type="GO" id="GO:0071004">
    <property type="term" value="C:U2-type prespliceosome"/>
    <property type="evidence" value="ECO:0000318"/>
    <property type="project" value="GO_Central"/>
</dbReference>
<dbReference type="GO" id="GO:0046540">
    <property type="term" value="C:U4/U6 x U5 tri-snRNP complex"/>
    <property type="evidence" value="ECO:0000250"/>
    <property type="project" value="dictyBase"/>
</dbReference>
<dbReference type="GO" id="GO:0005688">
    <property type="term" value="C:U6 snRNP"/>
    <property type="evidence" value="ECO:0000250"/>
    <property type="project" value="dictyBase"/>
</dbReference>
<dbReference type="GO" id="GO:0003723">
    <property type="term" value="F:RNA binding"/>
    <property type="evidence" value="ECO:0000250"/>
    <property type="project" value="dictyBase"/>
</dbReference>
<dbReference type="GO" id="GO:0006402">
    <property type="term" value="P:mRNA catabolic process"/>
    <property type="evidence" value="ECO:0000250"/>
    <property type="project" value="dictyBase"/>
</dbReference>
<dbReference type="GO" id="GO:0000398">
    <property type="term" value="P:mRNA splicing, via spliceosome"/>
    <property type="evidence" value="ECO:0000250"/>
    <property type="project" value="dictyBase"/>
</dbReference>
<dbReference type="GO" id="GO:0000956">
    <property type="term" value="P:nuclear-transcribed mRNA catabolic process"/>
    <property type="evidence" value="ECO:0007669"/>
    <property type="project" value="InterPro"/>
</dbReference>
<dbReference type="CDD" id="cd01729">
    <property type="entry name" value="LSm7"/>
    <property type="match status" value="1"/>
</dbReference>
<dbReference type="FunFam" id="2.30.30.100:FF:000062">
    <property type="entry name" value="Probable U6 snRNA-associated Sm-like protein LSm7"/>
    <property type="match status" value="1"/>
</dbReference>
<dbReference type="Gene3D" id="2.30.30.100">
    <property type="match status" value="1"/>
</dbReference>
<dbReference type="InterPro" id="IPR017132">
    <property type="entry name" value="Lsm7"/>
</dbReference>
<dbReference type="InterPro" id="IPR044641">
    <property type="entry name" value="Lsm7/SmG-like"/>
</dbReference>
<dbReference type="InterPro" id="IPR010920">
    <property type="entry name" value="LSM_dom_sf"/>
</dbReference>
<dbReference type="InterPro" id="IPR047575">
    <property type="entry name" value="Sm"/>
</dbReference>
<dbReference type="InterPro" id="IPR001163">
    <property type="entry name" value="Sm_dom_euk/arc"/>
</dbReference>
<dbReference type="PANTHER" id="PTHR10553">
    <property type="entry name" value="SMALL NUCLEAR RIBONUCLEOPROTEIN"/>
    <property type="match status" value="1"/>
</dbReference>
<dbReference type="PANTHER" id="PTHR10553:SF5">
    <property type="entry name" value="U6 SNRNA-ASSOCIATED SM-LIKE PROTEIN LSM7"/>
    <property type="match status" value="1"/>
</dbReference>
<dbReference type="Pfam" id="PF01423">
    <property type="entry name" value="LSM"/>
    <property type="match status" value="1"/>
</dbReference>
<dbReference type="PIRSF" id="PIRSF037188">
    <property type="entry name" value="U6_snRNA_Lsm7"/>
    <property type="match status" value="1"/>
</dbReference>
<dbReference type="SMART" id="SM00651">
    <property type="entry name" value="Sm"/>
    <property type="match status" value="1"/>
</dbReference>
<dbReference type="SUPFAM" id="SSF50182">
    <property type="entry name" value="Sm-like ribonucleoproteins"/>
    <property type="match status" value="1"/>
</dbReference>
<dbReference type="PROSITE" id="PS52002">
    <property type="entry name" value="SM"/>
    <property type="match status" value="1"/>
</dbReference>
<organism>
    <name type="scientific">Dictyostelium discoideum</name>
    <name type="common">Social amoeba</name>
    <dbReference type="NCBI Taxonomy" id="44689"/>
    <lineage>
        <taxon>Eukaryota</taxon>
        <taxon>Amoebozoa</taxon>
        <taxon>Evosea</taxon>
        <taxon>Eumycetozoa</taxon>
        <taxon>Dictyostelia</taxon>
        <taxon>Dictyosteliales</taxon>
        <taxon>Dictyosteliaceae</taxon>
        <taxon>Dictyostelium</taxon>
    </lineage>
</organism>
<protein>
    <recommendedName>
        <fullName>Probable U6 snRNA-associated Sm-like protein LSm7</fullName>
    </recommendedName>
</protein>
<feature type="chain" id="PRO_0000328009" description="Probable U6 snRNA-associated Sm-like protein LSm7">
    <location>
        <begin position="1"/>
        <end position="97"/>
    </location>
</feature>
<feature type="domain" description="Sm" evidence="2">
    <location>
        <begin position="10"/>
        <end position="90"/>
    </location>
</feature>
<gene>
    <name type="primary">lsm7</name>
    <name type="ORF">DDB_G0289499</name>
</gene>
<name>LSM7_DICDI</name>
<sequence>MTSSFNPKKESILDLQKFLGKEICVKFTGGREVQGILKGYDQLVNITLDQTQEFIRDAEDPLITTDEKRFLGLVVCRGSSVMMVCPTEGCEPIDNPY</sequence>
<comment type="function">
    <text evidence="1">Plays a role in pre-mRNA splicing as component of the U4/U6-U5 tri-snRNP complex that is involved in spliceosome assembly, and as component of the precatalytic spliceosome (spliceosome B complex). The heptameric LSM2-8 complex binds specifically to the 3'-terminal U-tract of U6 snRNA.</text>
</comment>
<comment type="subunit">
    <text evidence="1">Component of the precatalytic spliceosome (spliceosome B complex). Component of the U4/U6-U5 tri-snRNP complex, a building block of the precatalytic spliceosome (spliceosome B complex). LSM2, LSM3, LSM4, LSM5, LSM6, LSM7 and LSM8 form a heptameric, ring-shaped subcomplex (the LSM2-8 complex) that is part of the U4/U6-U5 tri-snRNP complex and the precatalytic spliceosome.</text>
</comment>
<comment type="subcellular location">
    <subcellularLocation>
        <location evidence="1">Nucleus</location>
    </subcellularLocation>
</comment>
<comment type="similarity">
    <text evidence="3">Belongs to the snRNP Sm proteins family.</text>
</comment>